<keyword id="KW-0007">Acetylation</keyword>
<keyword id="KW-0489">Methyltransferase</keyword>
<keyword id="KW-0539">Nucleus</keyword>
<keyword id="KW-0597">Phosphoprotein</keyword>
<keyword id="KW-1185">Reference proteome</keyword>
<keyword id="KW-0694">RNA-binding</keyword>
<keyword id="KW-0698">rRNA processing</keyword>
<keyword id="KW-0949">S-adenosyl-L-methionine</keyword>
<keyword id="KW-0808">Transferase</keyword>
<reference key="1">
    <citation type="journal article" date="2002" name="Hum. Genet.">
        <title>Identification of additional transcripts in the Williams-Beuren syndrome critical region.</title>
        <authorList>
            <person name="Merla G."/>
            <person name="Ucla C."/>
            <person name="Guipponi M."/>
            <person name="Reymond A."/>
        </authorList>
    </citation>
    <scope>NUCLEOTIDE SEQUENCE [MRNA]</scope>
</reference>
<reference key="2">
    <citation type="journal article" date="2005" name="Science">
        <title>The transcriptional landscape of the mammalian genome.</title>
        <authorList>
            <person name="Carninci P."/>
            <person name="Kasukawa T."/>
            <person name="Katayama S."/>
            <person name="Gough J."/>
            <person name="Frith M.C."/>
            <person name="Maeda N."/>
            <person name="Oyama R."/>
            <person name="Ravasi T."/>
            <person name="Lenhard B."/>
            <person name="Wells C."/>
            <person name="Kodzius R."/>
            <person name="Shimokawa K."/>
            <person name="Bajic V.B."/>
            <person name="Brenner S.E."/>
            <person name="Batalov S."/>
            <person name="Forrest A.R."/>
            <person name="Zavolan M."/>
            <person name="Davis M.J."/>
            <person name="Wilming L.G."/>
            <person name="Aidinis V."/>
            <person name="Allen J.E."/>
            <person name="Ambesi-Impiombato A."/>
            <person name="Apweiler R."/>
            <person name="Aturaliya R.N."/>
            <person name="Bailey T.L."/>
            <person name="Bansal M."/>
            <person name="Baxter L."/>
            <person name="Beisel K.W."/>
            <person name="Bersano T."/>
            <person name="Bono H."/>
            <person name="Chalk A.M."/>
            <person name="Chiu K.P."/>
            <person name="Choudhary V."/>
            <person name="Christoffels A."/>
            <person name="Clutterbuck D.R."/>
            <person name="Crowe M.L."/>
            <person name="Dalla E."/>
            <person name="Dalrymple B.P."/>
            <person name="de Bono B."/>
            <person name="Della Gatta G."/>
            <person name="di Bernardo D."/>
            <person name="Down T."/>
            <person name="Engstrom P."/>
            <person name="Fagiolini M."/>
            <person name="Faulkner G."/>
            <person name="Fletcher C.F."/>
            <person name="Fukushima T."/>
            <person name="Furuno M."/>
            <person name="Futaki S."/>
            <person name="Gariboldi M."/>
            <person name="Georgii-Hemming P."/>
            <person name="Gingeras T.R."/>
            <person name="Gojobori T."/>
            <person name="Green R.E."/>
            <person name="Gustincich S."/>
            <person name="Harbers M."/>
            <person name="Hayashi Y."/>
            <person name="Hensch T.K."/>
            <person name="Hirokawa N."/>
            <person name="Hill D."/>
            <person name="Huminiecki L."/>
            <person name="Iacono M."/>
            <person name="Ikeo K."/>
            <person name="Iwama A."/>
            <person name="Ishikawa T."/>
            <person name="Jakt M."/>
            <person name="Kanapin A."/>
            <person name="Katoh M."/>
            <person name="Kawasawa Y."/>
            <person name="Kelso J."/>
            <person name="Kitamura H."/>
            <person name="Kitano H."/>
            <person name="Kollias G."/>
            <person name="Krishnan S.P."/>
            <person name="Kruger A."/>
            <person name="Kummerfeld S.K."/>
            <person name="Kurochkin I.V."/>
            <person name="Lareau L.F."/>
            <person name="Lazarevic D."/>
            <person name="Lipovich L."/>
            <person name="Liu J."/>
            <person name="Liuni S."/>
            <person name="McWilliam S."/>
            <person name="Madan Babu M."/>
            <person name="Madera M."/>
            <person name="Marchionni L."/>
            <person name="Matsuda H."/>
            <person name="Matsuzawa S."/>
            <person name="Miki H."/>
            <person name="Mignone F."/>
            <person name="Miyake S."/>
            <person name="Morris K."/>
            <person name="Mottagui-Tabar S."/>
            <person name="Mulder N."/>
            <person name="Nakano N."/>
            <person name="Nakauchi H."/>
            <person name="Ng P."/>
            <person name="Nilsson R."/>
            <person name="Nishiguchi S."/>
            <person name="Nishikawa S."/>
            <person name="Nori F."/>
            <person name="Ohara O."/>
            <person name="Okazaki Y."/>
            <person name="Orlando V."/>
            <person name="Pang K.C."/>
            <person name="Pavan W.J."/>
            <person name="Pavesi G."/>
            <person name="Pesole G."/>
            <person name="Petrovsky N."/>
            <person name="Piazza S."/>
            <person name="Reed J."/>
            <person name="Reid J.F."/>
            <person name="Ring B.Z."/>
            <person name="Ringwald M."/>
            <person name="Rost B."/>
            <person name="Ruan Y."/>
            <person name="Salzberg S.L."/>
            <person name="Sandelin A."/>
            <person name="Schneider C."/>
            <person name="Schoenbach C."/>
            <person name="Sekiguchi K."/>
            <person name="Semple C.A."/>
            <person name="Seno S."/>
            <person name="Sessa L."/>
            <person name="Sheng Y."/>
            <person name="Shibata Y."/>
            <person name="Shimada H."/>
            <person name="Shimada K."/>
            <person name="Silva D."/>
            <person name="Sinclair B."/>
            <person name="Sperling S."/>
            <person name="Stupka E."/>
            <person name="Sugiura K."/>
            <person name="Sultana R."/>
            <person name="Takenaka Y."/>
            <person name="Taki K."/>
            <person name="Tammoja K."/>
            <person name="Tan S.L."/>
            <person name="Tang S."/>
            <person name="Taylor M.S."/>
            <person name="Tegner J."/>
            <person name="Teichmann S.A."/>
            <person name="Ueda H.R."/>
            <person name="van Nimwegen E."/>
            <person name="Verardo R."/>
            <person name="Wei C.L."/>
            <person name="Yagi K."/>
            <person name="Yamanishi H."/>
            <person name="Zabarovsky E."/>
            <person name="Zhu S."/>
            <person name="Zimmer A."/>
            <person name="Hide W."/>
            <person name="Bult C."/>
            <person name="Grimmond S.M."/>
            <person name="Teasdale R.D."/>
            <person name="Liu E.T."/>
            <person name="Brusic V."/>
            <person name="Quackenbush J."/>
            <person name="Wahlestedt C."/>
            <person name="Mattick J.S."/>
            <person name="Hume D.A."/>
            <person name="Kai C."/>
            <person name="Sasaki D."/>
            <person name="Tomaru Y."/>
            <person name="Fukuda S."/>
            <person name="Kanamori-Katayama M."/>
            <person name="Suzuki M."/>
            <person name="Aoki J."/>
            <person name="Arakawa T."/>
            <person name="Iida J."/>
            <person name="Imamura K."/>
            <person name="Itoh M."/>
            <person name="Kato T."/>
            <person name="Kawaji H."/>
            <person name="Kawagashira N."/>
            <person name="Kawashima T."/>
            <person name="Kojima M."/>
            <person name="Kondo S."/>
            <person name="Konno H."/>
            <person name="Nakano K."/>
            <person name="Ninomiya N."/>
            <person name="Nishio T."/>
            <person name="Okada M."/>
            <person name="Plessy C."/>
            <person name="Shibata K."/>
            <person name="Shiraki T."/>
            <person name="Suzuki S."/>
            <person name="Tagami M."/>
            <person name="Waki K."/>
            <person name="Watahiki A."/>
            <person name="Okamura-Oho Y."/>
            <person name="Suzuki H."/>
            <person name="Kawai J."/>
            <person name="Hayashizaki Y."/>
        </authorList>
    </citation>
    <scope>NUCLEOTIDE SEQUENCE [LARGE SCALE MRNA]</scope>
    <source>
        <strain>C57BL/6J</strain>
        <strain>NOD</strain>
        <tissue>Bone</tissue>
        <tissue>Liver</tissue>
        <tissue>Spleen</tissue>
    </source>
</reference>
<reference key="3">
    <citation type="journal article" date="2004" name="Genome Res.">
        <title>The status, quality, and expansion of the NIH full-length cDNA project: the Mammalian Gene Collection (MGC).</title>
        <authorList>
            <consortium name="The MGC Project Team"/>
        </authorList>
    </citation>
    <scope>NUCLEOTIDE SEQUENCE [LARGE SCALE MRNA] OF 183-465</scope>
    <source>
        <strain>C57BL/6J</strain>
        <tissue>Mammary gland</tissue>
    </source>
</reference>
<reference key="4">
    <citation type="journal article" date="2019" name="Cells">
        <title>Agenesis and hypomyelination of corpus callosum in mice lacking Nsun5, an RNA methyltransferase.</title>
        <authorList>
            <person name="Yuan Z."/>
            <person name="Chen P."/>
            <person name="Zhang T."/>
            <person name="Shen B."/>
            <person name="Chen L."/>
        </authorList>
    </citation>
    <scope>FUNCTION</scope>
    <scope>DEVELOPMENTAL STAGE</scope>
    <scope>DISRUPTION PHENOTYPE</scope>
</reference>
<reference key="5">
    <citation type="journal article" date="2019" name="Glia">
        <title>Cognitive deficits in mice lacking Nsun5, a cytosine-5 RNA methyltransferase, with impairment of oligodendrocyte precursor cells.</title>
        <authorList>
            <person name="Zhang T."/>
            <person name="Chen P."/>
            <person name="Li W."/>
            <person name="Sha S."/>
            <person name="Wang Y."/>
            <person name="Yuan Z."/>
            <person name="Shen B."/>
            <person name="Chen L."/>
        </authorList>
    </citation>
    <scope>DISRUPTION PHENOTYPE</scope>
    <scope>TISSUE SPECIFICITY</scope>
</reference>
<reference key="6">
    <citation type="journal article" date="2019" name="Mol. Brain">
        <title>Expression of the RNA methyltransferase Nsun5 is essential for developing cerebral cortex.</title>
        <authorList>
            <person name="Chen P."/>
            <person name="Zhang T."/>
            <person name="Yuan Z."/>
            <person name="Shen B."/>
            <person name="Chen L."/>
        </authorList>
    </citation>
    <scope>FUNCTION</scope>
    <scope>DEVELOPMENTAL STAGE</scope>
    <scope>DISRUPTION PHENOTYPE</scope>
</reference>
<reference key="7">
    <citation type="journal article" date="2019" name="Nucleic Acids Res.">
        <title>Loss of the ribosomal RNA methyltransferase NSUN5 impairs global protein synthesis and normal growth.</title>
        <authorList>
            <person name="Heissenberger C."/>
            <person name="Liendl L."/>
            <person name="Nagelreiter F."/>
            <person name="Gonskikh Y."/>
            <person name="Yang G."/>
            <person name="Stelzer E.M."/>
            <person name="Krammer T.L."/>
            <person name="Micutkova L."/>
            <person name="Vogt S."/>
            <person name="Kreil D.P."/>
            <person name="Sekot G."/>
            <person name="Siena E."/>
            <person name="Poser I."/>
            <person name="Harreither E."/>
            <person name="Linder A."/>
            <person name="Ehret V."/>
            <person name="Helbich T.H."/>
            <person name="Grillari-Voglauer R."/>
            <person name="Jansen-Duerr P."/>
            <person name="Kos M."/>
            <person name="Polacek N."/>
            <person name="Grillari J."/>
            <person name="Schosserer M."/>
        </authorList>
    </citation>
    <scope>FUNCTION</scope>
    <scope>CATALYTIC ACTIVITY</scope>
    <scope>DISRUPTION PHENOTYPE</scope>
</reference>
<name>NSUN5_MOUSE</name>
<dbReference type="EC" id="2.1.1.-" evidence="12"/>
<dbReference type="EMBL" id="AF412029">
    <property type="protein sequence ID" value="AAM62311.1"/>
    <property type="molecule type" value="mRNA"/>
</dbReference>
<dbReference type="EMBL" id="AK079400">
    <property type="protein sequence ID" value="BAC37634.1"/>
    <property type="molecule type" value="mRNA"/>
</dbReference>
<dbReference type="EMBL" id="AK149521">
    <property type="protein sequence ID" value="BAE28935.1"/>
    <property type="molecule type" value="mRNA"/>
</dbReference>
<dbReference type="EMBL" id="AK156651">
    <property type="protein sequence ID" value="BAE33793.1"/>
    <property type="molecule type" value="mRNA"/>
</dbReference>
<dbReference type="EMBL" id="BC051209">
    <property type="protein sequence ID" value="AAH51209.1"/>
    <property type="status" value="ALT_INIT"/>
    <property type="molecule type" value="mRNA"/>
</dbReference>
<dbReference type="CCDS" id="CCDS19740.1"/>
<dbReference type="RefSeq" id="NP_663389.2">
    <property type="nucleotide sequence ID" value="NM_145414.2"/>
</dbReference>
<dbReference type="SMR" id="Q8K4F6"/>
<dbReference type="BioGRID" id="221497">
    <property type="interactions" value="1"/>
</dbReference>
<dbReference type="FunCoup" id="Q8K4F6">
    <property type="interactions" value="2227"/>
</dbReference>
<dbReference type="IntAct" id="Q8K4F6">
    <property type="interactions" value="1"/>
</dbReference>
<dbReference type="MINT" id="Q8K4F6"/>
<dbReference type="STRING" id="10090.ENSMUSP00000000940"/>
<dbReference type="GlyGen" id="Q8K4F6">
    <property type="glycosylation" value="1 site"/>
</dbReference>
<dbReference type="iPTMnet" id="Q8K4F6"/>
<dbReference type="PhosphoSitePlus" id="Q8K4F6"/>
<dbReference type="jPOST" id="Q8K4F6"/>
<dbReference type="PaxDb" id="10090-ENSMUSP00000000940"/>
<dbReference type="PeptideAtlas" id="Q8K4F6"/>
<dbReference type="ProteomicsDB" id="252860"/>
<dbReference type="Pumba" id="Q8K4F6"/>
<dbReference type="Antibodypedia" id="14275">
    <property type="antibodies" value="82 antibodies from 22 providers"/>
</dbReference>
<dbReference type="DNASU" id="100609"/>
<dbReference type="Ensembl" id="ENSMUST00000000940.15">
    <property type="protein sequence ID" value="ENSMUSP00000000940.9"/>
    <property type="gene ID" value="ENSMUSG00000000916.16"/>
</dbReference>
<dbReference type="GeneID" id="100609"/>
<dbReference type="KEGG" id="mmu:100609"/>
<dbReference type="UCSC" id="uc008zyh.1">
    <property type="organism name" value="mouse"/>
</dbReference>
<dbReference type="AGR" id="MGI:2140844"/>
<dbReference type="CTD" id="55695"/>
<dbReference type="MGI" id="MGI:2140844">
    <property type="gene designation" value="Nsun5"/>
</dbReference>
<dbReference type="VEuPathDB" id="HostDB:ENSMUSG00000000916"/>
<dbReference type="eggNOG" id="KOG2360">
    <property type="taxonomic scope" value="Eukaryota"/>
</dbReference>
<dbReference type="GeneTree" id="ENSGT00940000155974"/>
<dbReference type="HOGENOM" id="CLU_005316_7_4_1"/>
<dbReference type="InParanoid" id="Q8K4F6"/>
<dbReference type="OMA" id="SFKSRIY"/>
<dbReference type="OrthoDB" id="435282at2759"/>
<dbReference type="PhylomeDB" id="Q8K4F6"/>
<dbReference type="TreeFam" id="TF314285"/>
<dbReference type="BioGRID-ORCS" id="100609">
    <property type="hits" value="14 hits in 78 CRISPR screens"/>
</dbReference>
<dbReference type="ChiTaRS" id="Nsun5">
    <property type="organism name" value="mouse"/>
</dbReference>
<dbReference type="PRO" id="PR:Q8K4F6"/>
<dbReference type="Proteomes" id="UP000000589">
    <property type="component" value="Chromosome 5"/>
</dbReference>
<dbReference type="RNAct" id="Q8K4F6">
    <property type="molecule type" value="protein"/>
</dbReference>
<dbReference type="Bgee" id="ENSMUSG00000000916">
    <property type="expression patterns" value="Expressed in dorsal pancreas and 226 other cell types or tissues"/>
</dbReference>
<dbReference type="ExpressionAtlas" id="Q8K4F6">
    <property type="expression patterns" value="baseline and differential"/>
</dbReference>
<dbReference type="GO" id="GO:0005730">
    <property type="term" value="C:nucleolus"/>
    <property type="evidence" value="ECO:0000250"/>
    <property type="project" value="UniProtKB"/>
</dbReference>
<dbReference type="GO" id="GO:0005654">
    <property type="term" value="C:nucleoplasm"/>
    <property type="evidence" value="ECO:0007669"/>
    <property type="project" value="Ensembl"/>
</dbReference>
<dbReference type="GO" id="GO:0003723">
    <property type="term" value="F:RNA binding"/>
    <property type="evidence" value="ECO:0007669"/>
    <property type="project" value="UniProtKB-KW"/>
</dbReference>
<dbReference type="GO" id="GO:0009383">
    <property type="term" value="F:rRNA (cytosine-C5-)-methyltransferase activity"/>
    <property type="evidence" value="ECO:0000314"/>
    <property type="project" value="UniProtKB"/>
</dbReference>
<dbReference type="GO" id="GO:0021987">
    <property type="term" value="P:cerebral cortex development"/>
    <property type="evidence" value="ECO:0000315"/>
    <property type="project" value="UniProtKB"/>
</dbReference>
<dbReference type="GO" id="GO:0050890">
    <property type="term" value="P:cognition"/>
    <property type="evidence" value="ECO:0000315"/>
    <property type="project" value="UniProtKB"/>
</dbReference>
<dbReference type="GO" id="GO:0022038">
    <property type="term" value="P:corpus callosum development"/>
    <property type="evidence" value="ECO:0000315"/>
    <property type="project" value="UniProtKB"/>
</dbReference>
<dbReference type="GO" id="GO:0014003">
    <property type="term" value="P:oligodendrocyte development"/>
    <property type="evidence" value="ECO:0000315"/>
    <property type="project" value="UniProtKB"/>
</dbReference>
<dbReference type="GO" id="GO:0045727">
    <property type="term" value="P:positive regulation of translation"/>
    <property type="evidence" value="ECO:0000250"/>
    <property type="project" value="UniProtKB"/>
</dbReference>
<dbReference type="GO" id="GO:0031641">
    <property type="term" value="P:regulation of myelination"/>
    <property type="evidence" value="ECO:0000315"/>
    <property type="project" value="UniProtKB"/>
</dbReference>
<dbReference type="GO" id="GO:0070475">
    <property type="term" value="P:rRNA base methylation"/>
    <property type="evidence" value="ECO:0000314"/>
    <property type="project" value="UniProtKB"/>
</dbReference>
<dbReference type="FunFam" id="3.30.70.1170:FF:000004">
    <property type="entry name" value="probable 28S rRNA (Cytosine-C(5))-methyltransferase isoform X2"/>
    <property type="match status" value="1"/>
</dbReference>
<dbReference type="FunFam" id="3.40.50.150:FF:000139">
    <property type="entry name" value="probable 28S rRNA (Cytosine-C(5))-methyltransferase isoform X2"/>
    <property type="match status" value="1"/>
</dbReference>
<dbReference type="Gene3D" id="3.30.70.1170">
    <property type="entry name" value="Sun protein, domain 3"/>
    <property type="match status" value="1"/>
</dbReference>
<dbReference type="Gene3D" id="3.40.50.150">
    <property type="entry name" value="Vaccinia Virus protein VP39"/>
    <property type="match status" value="1"/>
</dbReference>
<dbReference type="InterPro" id="IPR049560">
    <property type="entry name" value="MeTrfase_RsmB-F_NOP2_cat"/>
</dbReference>
<dbReference type="InterPro" id="IPR001678">
    <property type="entry name" value="MeTrfase_RsmB-F_NOP2_dom"/>
</dbReference>
<dbReference type="InterPro" id="IPR049561">
    <property type="entry name" value="NSUN5_7_fdxn-like"/>
</dbReference>
<dbReference type="InterPro" id="IPR048889">
    <property type="entry name" value="NSUN5_RCM1_N"/>
</dbReference>
<dbReference type="InterPro" id="IPR023267">
    <property type="entry name" value="RCMT"/>
</dbReference>
<dbReference type="InterPro" id="IPR029063">
    <property type="entry name" value="SAM-dependent_MTases_sf"/>
</dbReference>
<dbReference type="PANTHER" id="PTHR22807:SF4">
    <property type="entry name" value="28S RRNA (CYTOSINE-C(5))-METHYLTRANSFERASE"/>
    <property type="match status" value="1"/>
</dbReference>
<dbReference type="PANTHER" id="PTHR22807">
    <property type="entry name" value="NOP2 YEAST -RELATED NOL1/NOP2/FMU SUN DOMAIN-CONTAINING"/>
    <property type="match status" value="1"/>
</dbReference>
<dbReference type="Pfam" id="PF01189">
    <property type="entry name" value="Methyltr_RsmB-F"/>
    <property type="match status" value="1"/>
</dbReference>
<dbReference type="Pfam" id="PF21148">
    <property type="entry name" value="NSUN5_fdxn-like"/>
    <property type="match status" value="1"/>
</dbReference>
<dbReference type="Pfam" id="PF21153">
    <property type="entry name" value="NSUN5_N"/>
    <property type="match status" value="1"/>
</dbReference>
<dbReference type="PRINTS" id="PR02008">
    <property type="entry name" value="RCMTFAMILY"/>
</dbReference>
<dbReference type="SUPFAM" id="SSF53335">
    <property type="entry name" value="S-adenosyl-L-methionine-dependent methyltransferases"/>
    <property type="match status" value="1"/>
</dbReference>
<dbReference type="PROSITE" id="PS51686">
    <property type="entry name" value="SAM_MT_RSMB_NOP"/>
    <property type="match status" value="1"/>
</dbReference>
<sequence>MGLYAAAAAVLAGVESRQGSLKGLVYSSNFQNLKQLYALVCETQRYSAVLDAVIASAGLLRAEKKLRPHLAKVLVYELLLGKGFRGGGGRWKALLGRHQARLKAELARLKVHRGVSRNEDLLQESSRPGQAYQVPRFVRVNTLKTRPEDAIDYFKRQGFSYQGRASSLEDLRALKGQHFLLDPLLPELLVFPAQTDLHEHPLYRAGHLILQDKASCLPAMLLSPPPGSHVIDACAAPGNKTSYIAALLKNQGKIFAFDQDAKRLAAMATLVARAGVSCCELAEKDFLTVSPSDQRYSQVQYILLDPSCSGSGMLSRQLEEHGEGTPSKERLQALAGFQQRALCHALRFPSLQRLVYSTCSLCQEENEDVVQEALQHNSGTFRLAPVLPTWPHRGLSTFPGSEHCLRASPETTLTGGFFIAVFERAEVVPTPAPQTDAMDPEPLSQVPKRKRRRKAAVGASMQPST</sequence>
<organism>
    <name type="scientific">Mus musculus</name>
    <name type="common">Mouse</name>
    <dbReference type="NCBI Taxonomy" id="10090"/>
    <lineage>
        <taxon>Eukaryota</taxon>
        <taxon>Metazoa</taxon>
        <taxon>Chordata</taxon>
        <taxon>Craniata</taxon>
        <taxon>Vertebrata</taxon>
        <taxon>Euteleostomi</taxon>
        <taxon>Mammalia</taxon>
        <taxon>Eutheria</taxon>
        <taxon>Euarchontoglires</taxon>
        <taxon>Glires</taxon>
        <taxon>Rodentia</taxon>
        <taxon>Myomorpha</taxon>
        <taxon>Muroidea</taxon>
        <taxon>Muridae</taxon>
        <taxon>Murinae</taxon>
        <taxon>Mus</taxon>
        <taxon>Mus</taxon>
    </lineage>
</organism>
<proteinExistence type="evidence at protein level"/>
<accession>Q8K4F6</accession>
<accession>Q3U0Q8</accession>
<accession>Q80WG3</accession>
<accession>Q8C568</accession>
<evidence type="ECO:0000250" key="1">
    <source>
        <dbReference type="UniProtKB" id="Q96P11"/>
    </source>
</evidence>
<evidence type="ECO:0000255" key="2">
    <source>
        <dbReference type="PROSITE-ProRule" id="PRU01023"/>
    </source>
</evidence>
<evidence type="ECO:0000256" key="3">
    <source>
        <dbReference type="SAM" id="MobiDB-lite"/>
    </source>
</evidence>
<evidence type="ECO:0000269" key="4">
    <source>
    </source>
</evidence>
<evidence type="ECO:0000269" key="5">
    <source>
    </source>
</evidence>
<evidence type="ECO:0000269" key="6">
    <source>
    </source>
</evidence>
<evidence type="ECO:0000269" key="7">
    <source>
    </source>
</evidence>
<evidence type="ECO:0000303" key="8">
    <source>
    </source>
</evidence>
<evidence type="ECO:0000303" key="9">
    <source>
    </source>
</evidence>
<evidence type="ECO:0000303" key="10">
    <source>
    </source>
</evidence>
<evidence type="ECO:0000305" key="11"/>
<evidence type="ECO:0000305" key="12">
    <source>
    </source>
</evidence>
<evidence type="ECO:0000312" key="13">
    <source>
        <dbReference type="MGI" id="MGI:2140844"/>
    </source>
</evidence>
<feature type="initiator methionine" description="Removed" evidence="1">
    <location>
        <position position="1"/>
    </location>
</feature>
<feature type="chain" id="PRO_0000261670" description="28S rRNA (cytosine-C(5))-methyltransferase">
    <location>
        <begin position="2"/>
        <end position="465"/>
    </location>
</feature>
<feature type="region of interest" description="Disordered" evidence="3">
    <location>
        <begin position="430"/>
        <end position="465"/>
    </location>
</feature>
<feature type="active site" description="Nucleophile" evidence="2">
    <location>
        <position position="359"/>
    </location>
</feature>
<feature type="binding site" evidence="2">
    <location>
        <begin position="234"/>
        <end position="240"/>
    </location>
    <ligand>
        <name>S-adenosyl-L-methionine</name>
        <dbReference type="ChEBI" id="CHEBI:59789"/>
    </ligand>
</feature>
<feature type="binding site" evidence="2">
    <location>
        <position position="258"/>
    </location>
    <ligand>
        <name>S-adenosyl-L-methionine</name>
        <dbReference type="ChEBI" id="CHEBI:59789"/>
    </ligand>
</feature>
<feature type="binding site" evidence="2">
    <location>
        <position position="263"/>
    </location>
    <ligand>
        <name>S-adenosyl-L-methionine</name>
        <dbReference type="ChEBI" id="CHEBI:59789"/>
    </ligand>
</feature>
<feature type="binding site" evidence="2">
    <location>
        <position position="305"/>
    </location>
    <ligand>
        <name>S-adenosyl-L-methionine</name>
        <dbReference type="ChEBI" id="CHEBI:59789"/>
    </ligand>
</feature>
<feature type="modified residue" description="N-acetylglycine" evidence="1">
    <location>
        <position position="2"/>
    </location>
</feature>
<feature type="modified residue" description="Phosphoserine" evidence="1">
    <location>
        <position position="167"/>
    </location>
</feature>
<feature type="sequence conflict" description="In Ref. 2; BAE33793." evidence="11" ref="2">
    <original>V</original>
    <variation>M</variation>
    <location>
        <position position="40"/>
    </location>
</feature>
<feature type="sequence conflict" description="In Ref. 1; AAM62311." evidence="11" ref="1">
    <original>Q</original>
    <variation>H</variation>
    <location>
        <position position="130"/>
    </location>
</feature>
<feature type="sequence conflict" description="In Ref. 2; BAE33793." evidence="11" ref="2">
    <original>S</original>
    <variation>N</variation>
    <location>
        <position position="396"/>
    </location>
</feature>
<feature type="sequence conflict" description="In Ref. 3; AAH51209." evidence="11" ref="3">
    <original>L</original>
    <variation>F</variation>
    <location>
        <position position="443"/>
    </location>
</feature>
<gene>
    <name evidence="9 10 13" type="primary">Nsun5</name>
    <name evidence="8" type="synonym">Wbscr20a</name>
</gene>
<comment type="function">
    <text evidence="1 5 6 7">S-adenosyl-L-methionine-dependent methyltransferase that specifically methylates the C(5) position of cytosine 3438 (m5C3438) in 28S rRNA (PubMed:31722427). m5C3782 promotes protein translation without affecting ribosome biogenesis and fidelity (By similarity). Required for corpus callosum and cerebral cortex development (PubMed:31174389, PubMed:31462248).</text>
</comment>
<comment type="catalytic activity">
    <reaction evidence="12">
        <text>a cytidine in 28S rRNA + S-adenosyl-L-methionine = a 5-methylcytidine in 28S rRNA + S-adenosyl-L-homocysteine + H(+)</text>
        <dbReference type="Rhea" id="RHEA:47788"/>
        <dbReference type="Rhea" id="RHEA-COMP:11915"/>
        <dbReference type="Rhea" id="RHEA-COMP:11916"/>
        <dbReference type="ChEBI" id="CHEBI:15378"/>
        <dbReference type="ChEBI" id="CHEBI:57856"/>
        <dbReference type="ChEBI" id="CHEBI:59789"/>
        <dbReference type="ChEBI" id="CHEBI:74483"/>
        <dbReference type="ChEBI" id="CHEBI:82748"/>
    </reaction>
    <physiologicalReaction direction="left-to-right" evidence="12">
        <dbReference type="Rhea" id="RHEA:47789"/>
    </physiologicalReaction>
</comment>
<comment type="subcellular location">
    <subcellularLocation>
        <location evidence="1">Nucleus</location>
        <location evidence="1">Nucleolus</location>
    </subcellularLocation>
</comment>
<comment type="tissue specificity">
    <text evidence="4">In the hippocampus, specifically expressed in adult hippocampal NG2-positive oligodendrocyte precursor cells (at protein level).</text>
</comment>
<comment type="developmental stage">
    <text evidence="5 6">Present in the developing cerebral cortex from embryonic day 12.5 dpc, with a peak at 14.5 dpc followed by a decrease from 18.5 dpc (at protein level) (PubMed:31462248). Selectively expressed in radial glial cells of cerebral cortex from 12.5 to 16.5 dpc, but not in intermediate progenitor cells (IPCs) or neocortical neurons (at protein level) (PubMed:31462248). Highly expressed in callosal oligodendrocyte precursor cells (OPCs) and oligodendrocytes (OLs) from postnatal day 7 to postnatal day 28 (PubMed:31174389).</text>
</comment>
<comment type="disruption phenotype">
    <text evidence="4 5 6 7">Decreased body weight and lean mass without alterations in food intake (PubMed:31722427). Adult mice show spatial cognitive deficits, possibly caused by defects in development and function of oligodendrocyte precursor cells (PubMed:30485550). Mice display a reduction of the corpus callosum with a decline in the number of myelinated axons and loose myelin sheath (PubMed:31174389). They also show impaired development of the cerebral cortex, characterized by impaired growth of radial glial scaffold (PubMed:31462248).</text>
</comment>
<comment type="similarity">
    <text evidence="2">Belongs to the class I-like SAM-binding methyltransferase superfamily. RsmB/NOP family.</text>
</comment>
<comment type="sequence caution" evidence="11">
    <conflict type="erroneous initiation">
        <sequence resource="EMBL-CDS" id="AAH51209"/>
    </conflict>
</comment>
<protein>
    <recommendedName>
        <fullName evidence="11">28S rRNA (cytosine-C(5))-methyltransferase</fullName>
        <ecNumber evidence="12">2.1.1.-</ecNumber>
    </recommendedName>
    <alternativeName>
        <fullName evidence="9 10">NOL1/NOP2/Sun domain family member 5</fullName>
    </alternativeName>
    <alternativeName>
        <fullName evidence="8">Williams-Beuren syndrome chromosomal region 20A protein homolog</fullName>
    </alternativeName>
</protein>